<accession>H9GBX2</accession>
<dbReference type="EMBL" id="AAWZ02026577">
    <property type="status" value="NOT_ANNOTATED_CDS"/>
    <property type="molecule type" value="Genomic_DNA"/>
</dbReference>
<dbReference type="RefSeq" id="XP_003226512.1">
    <property type="nucleotide sequence ID" value="XM_003226464.2"/>
</dbReference>
<dbReference type="SMR" id="H9GBX2"/>
<dbReference type="FunCoup" id="H9GBX2">
    <property type="interactions" value="2"/>
</dbReference>
<dbReference type="STRING" id="28377.ENSACAP00000006638"/>
<dbReference type="Ensembl" id="ENSACAT00000006784.4">
    <property type="protein sequence ID" value="ENSACAP00000006638.2"/>
    <property type="gene ID" value="ENSACAG00000006704.4"/>
</dbReference>
<dbReference type="GeneID" id="100565527"/>
<dbReference type="KEGG" id="acs:100565527"/>
<dbReference type="CTD" id="6337"/>
<dbReference type="eggNOG" id="KOG4294">
    <property type="taxonomic scope" value="Eukaryota"/>
</dbReference>
<dbReference type="GeneTree" id="ENSGT00940000160952"/>
<dbReference type="HOGENOM" id="CLU_020415_0_0_1"/>
<dbReference type="InParanoid" id="H9GBX2"/>
<dbReference type="OMA" id="MRQCKQE"/>
<dbReference type="OrthoDB" id="6238402at2759"/>
<dbReference type="TreeFam" id="TF330663"/>
<dbReference type="Proteomes" id="UP000001646">
    <property type="component" value="Unplaced"/>
</dbReference>
<dbReference type="Bgee" id="ENSACAG00000006704">
    <property type="expression patterns" value="Expressed in kidney and 2 other cell types or tissues"/>
</dbReference>
<dbReference type="GO" id="GO:0001669">
    <property type="term" value="C:acrosomal vesicle"/>
    <property type="evidence" value="ECO:0007669"/>
    <property type="project" value="UniProtKB-SubCell"/>
</dbReference>
<dbReference type="GO" id="GO:0016324">
    <property type="term" value="C:apical plasma membrane"/>
    <property type="evidence" value="ECO:0000250"/>
    <property type="project" value="UniProtKB"/>
</dbReference>
<dbReference type="GO" id="GO:0005737">
    <property type="term" value="C:cytoplasm"/>
    <property type="evidence" value="ECO:0000250"/>
    <property type="project" value="UniProtKB"/>
</dbReference>
<dbReference type="GO" id="GO:0031514">
    <property type="term" value="C:motile cilium"/>
    <property type="evidence" value="ECO:0007669"/>
    <property type="project" value="UniProtKB-SubCell"/>
</dbReference>
<dbReference type="GO" id="GO:0005886">
    <property type="term" value="C:plasma membrane"/>
    <property type="evidence" value="ECO:0000318"/>
    <property type="project" value="GO_Central"/>
</dbReference>
<dbReference type="GO" id="GO:0034706">
    <property type="term" value="C:sodium channel complex"/>
    <property type="evidence" value="ECO:0000318"/>
    <property type="project" value="GO_Central"/>
</dbReference>
<dbReference type="GO" id="GO:0015280">
    <property type="term" value="F:ligand-gated sodium channel activity"/>
    <property type="evidence" value="ECO:0000318"/>
    <property type="project" value="GO_Central"/>
</dbReference>
<dbReference type="GO" id="GO:0035725">
    <property type="term" value="P:sodium ion transmembrane transport"/>
    <property type="evidence" value="ECO:0000250"/>
    <property type="project" value="UniProtKB"/>
</dbReference>
<dbReference type="FunFam" id="2.60.470.10:FF:000002">
    <property type="entry name" value="Amiloride-sensitive sodium channel subunit alpha"/>
    <property type="match status" value="1"/>
</dbReference>
<dbReference type="Gene3D" id="2.60.470.10">
    <property type="entry name" value="Acid-sensing ion channels like domains"/>
    <property type="match status" value="1"/>
</dbReference>
<dbReference type="Gene3D" id="1.10.287.770">
    <property type="entry name" value="YojJ-like"/>
    <property type="match status" value="1"/>
</dbReference>
<dbReference type="InterPro" id="IPR001873">
    <property type="entry name" value="ENaC"/>
</dbReference>
<dbReference type="InterPro" id="IPR004724">
    <property type="entry name" value="ENaC_chordates"/>
</dbReference>
<dbReference type="InterPro" id="IPR020903">
    <property type="entry name" value="ENaC_CS"/>
</dbReference>
<dbReference type="NCBIfam" id="TIGR00859">
    <property type="entry name" value="ENaC"/>
    <property type="match status" value="1"/>
</dbReference>
<dbReference type="PANTHER" id="PTHR11690:SF124">
    <property type="entry name" value="AMILORIDE-SENSITIVE SODIUM CHANNEL SUBUNIT ALPHA"/>
    <property type="match status" value="1"/>
</dbReference>
<dbReference type="PANTHER" id="PTHR11690">
    <property type="entry name" value="AMILORIDE-SENSITIVE SODIUM CHANNEL-RELATED"/>
    <property type="match status" value="1"/>
</dbReference>
<dbReference type="Pfam" id="PF00858">
    <property type="entry name" value="ASC"/>
    <property type="match status" value="1"/>
</dbReference>
<dbReference type="PRINTS" id="PR01078">
    <property type="entry name" value="AMINACHANNEL"/>
</dbReference>
<dbReference type="PROSITE" id="PS01206">
    <property type="entry name" value="ASC"/>
    <property type="match status" value="1"/>
</dbReference>
<keyword id="KW-1003">Cell membrane</keyword>
<keyword id="KW-0966">Cell projection</keyword>
<keyword id="KW-0969">Cilium</keyword>
<keyword id="KW-0963">Cytoplasm</keyword>
<keyword id="KW-0968">Cytoplasmic vesicle</keyword>
<keyword id="KW-1015">Disulfide bond</keyword>
<keyword id="KW-0282">Flagellum</keyword>
<keyword id="KW-0407">Ion channel</keyword>
<keyword id="KW-0406">Ion transport</keyword>
<keyword id="KW-0472">Membrane</keyword>
<keyword id="KW-1185">Reference proteome</keyword>
<keyword id="KW-0915">Sodium</keyword>
<keyword id="KW-0894">Sodium channel</keyword>
<keyword id="KW-0739">Sodium transport</keyword>
<keyword id="KW-0812">Transmembrane</keyword>
<keyword id="KW-1133">Transmembrane helix</keyword>
<keyword id="KW-0813">Transport</keyword>
<proteinExistence type="inferred from homology"/>
<feature type="chain" id="PRO_0000432909" description="Epithelial sodium channel subunit alpha">
    <location>
        <begin position="1"/>
        <end position="636"/>
    </location>
</feature>
<feature type="topological domain" description="Cytoplasmic" evidence="2">
    <location>
        <begin position="1"/>
        <end position="77"/>
    </location>
</feature>
<feature type="transmembrane region" description="Helical; Name=1" evidence="4">
    <location>
        <begin position="78"/>
        <end position="98"/>
    </location>
</feature>
<feature type="topological domain" description="Extracellular" evidence="2">
    <location>
        <begin position="99"/>
        <end position="549"/>
    </location>
</feature>
<feature type="transmembrane region" description="Helical; Name=2" evidence="4">
    <location>
        <begin position="550"/>
        <end position="570"/>
    </location>
</feature>
<feature type="topological domain" description="Cytoplasmic" evidence="2">
    <location>
        <begin position="571"/>
        <end position="636"/>
    </location>
</feature>
<feature type="region of interest" description="Disordered" evidence="5">
    <location>
        <begin position="1"/>
        <end position="28"/>
    </location>
</feature>
<feature type="disulfide bond" evidence="1">
    <location>
        <begin position="126"/>
        <end position="293"/>
    </location>
</feature>
<feature type="disulfide bond" evidence="1">
    <location>
        <begin position="218"/>
        <end position="225"/>
    </location>
</feature>
<feature type="disulfide bond" evidence="1">
    <location>
        <begin position="270"/>
        <end position="277"/>
    </location>
</feature>
<feature type="disulfide bond" evidence="1">
    <location>
        <begin position="381"/>
        <end position="466"/>
    </location>
</feature>
<feature type="disulfide bond" evidence="1">
    <location>
        <begin position="403"/>
        <end position="462"/>
    </location>
</feature>
<feature type="disulfide bond" evidence="1">
    <location>
        <begin position="403"/>
        <end position="443"/>
    </location>
</feature>
<feature type="disulfide bond" evidence="1">
    <location>
        <begin position="407"/>
        <end position="458"/>
    </location>
</feature>
<feature type="disulfide bond" evidence="1">
    <location>
        <begin position="416"/>
        <end position="466"/>
    </location>
</feature>
<feature type="disulfide bond" evidence="1">
    <location>
        <begin position="416"/>
        <end position="443"/>
    </location>
</feature>
<feature type="disulfide bond" evidence="1">
    <location>
        <begin position="418"/>
        <end position="432"/>
    </location>
</feature>
<comment type="function">
    <text evidence="3">This is one of the three pore-forming subunits of the heterotrimeric epithelial sodium channel (ENaC), a critical regulator of sodium balance and fluid homeostasis. ENaC operates in epithelial tissues, where it mediates the electrodiffusion of sodium ions from extracellular fluid through the apical membrane of cells, with water following osmotically.</text>
</comment>
<comment type="catalytic activity">
    <reaction evidence="1">
        <text>Na(+)(in) = Na(+)(out)</text>
        <dbReference type="Rhea" id="RHEA:34963"/>
        <dbReference type="ChEBI" id="CHEBI:29101"/>
    </reaction>
</comment>
<comment type="activity regulation">
    <text evidence="1">Originally identified and characterized by its inhibition by the diuretic drug amiloride.</text>
</comment>
<comment type="subunit">
    <text evidence="1">Heterotrimer; containing an alpha/SCNN1A, a beta/SCNN1B and a gamma/SCNN1G subunit.</text>
</comment>
<comment type="subcellular location">
    <subcellularLocation>
        <location evidence="2">Apical cell membrane</location>
        <topology evidence="2">Multi-pass membrane protein</topology>
    </subcellularLocation>
    <subcellularLocation>
        <location evidence="1">Cell projection</location>
        <location evidence="1">Cilium</location>
    </subcellularLocation>
    <subcellularLocation>
        <location evidence="1">Cytoplasmic granule</location>
    </subcellularLocation>
    <subcellularLocation>
        <location evidence="1">Cytoplasm</location>
    </subcellularLocation>
    <subcellularLocation>
        <location evidence="2">Cytoplasmic vesicle</location>
        <location evidence="2">Secretory vesicle</location>
        <location evidence="2">Acrosome</location>
    </subcellularLocation>
    <subcellularLocation>
        <location evidence="2">Cell projection</location>
        <location evidence="2">Cilium</location>
        <location evidence="2">Flagellum</location>
    </subcellularLocation>
</comment>
<comment type="similarity">
    <text evidence="6">Belongs to the amiloride-sensitive sodium channel (TC 1.A.6) family. SCNN1A subfamily.</text>
</comment>
<reference key="1">
    <citation type="journal article" date="2011" name="Nature">
        <title>The genome of the green anole lizard and a comparative analysis with birds and mammals.</title>
        <authorList>
            <person name="Alfoeldi J."/>
            <person name="Di Palma F."/>
            <person name="Grabherr M."/>
            <person name="Williams C."/>
            <person name="Kong L."/>
            <person name="Mauceli E."/>
            <person name="Russell P."/>
            <person name="Lowe C.B."/>
            <person name="Glor R.E."/>
            <person name="Jaffe J.D."/>
            <person name="Ray D.A."/>
            <person name="Boissinot S."/>
            <person name="Shedlock A.M."/>
            <person name="Botka C."/>
            <person name="Castoe T.A."/>
            <person name="Colbourne J.K."/>
            <person name="Fujita M.K."/>
            <person name="Moreno R.G."/>
            <person name="ten Hallers B.F."/>
            <person name="Haussler D."/>
            <person name="Heger A."/>
            <person name="Heiman D."/>
            <person name="Janes D.E."/>
            <person name="Johnson J."/>
            <person name="de Jong P.J."/>
            <person name="Koriabine M.Y."/>
            <person name="Lara M."/>
            <person name="Novick P.A."/>
            <person name="Organ C.L."/>
            <person name="Peach S.E."/>
            <person name="Poe S."/>
            <person name="Pollock D.D."/>
            <person name="de Queiroz K."/>
            <person name="Sanger T."/>
            <person name="Searle S."/>
            <person name="Smith J.D."/>
            <person name="Smith Z."/>
            <person name="Swofford R."/>
            <person name="Turner-Maier J."/>
            <person name="Wade J."/>
            <person name="Young S."/>
            <person name="Zadissa A."/>
            <person name="Edwards S.V."/>
            <person name="Glenn T.C."/>
            <person name="Schneider C.J."/>
            <person name="Losos J.B."/>
            <person name="Lander E.S."/>
            <person name="Breen M."/>
            <person name="Ponting C.P."/>
            <person name="Lindblad-Toh K."/>
        </authorList>
    </citation>
    <scope>NUCLEOTIDE SEQUENCE [LARGE SCALE GENOMIC DNA]</scope>
</reference>
<name>SCNNA_ANOCA</name>
<gene>
    <name evidence="1" type="primary">SCNN1A</name>
</gene>
<protein>
    <recommendedName>
        <fullName evidence="1">Epithelial sodium channel subunit alpha</fullName>
    </recommendedName>
    <alternativeName>
        <fullName evidence="1">Amiloride-sensitive sodium channel subunit alpha</fullName>
    </alternativeName>
</protein>
<organism>
    <name type="scientific">Anolis carolinensis</name>
    <name type="common">Green anole</name>
    <name type="synonym">American chameleon</name>
    <dbReference type="NCBI Taxonomy" id="28377"/>
    <lineage>
        <taxon>Eukaryota</taxon>
        <taxon>Metazoa</taxon>
        <taxon>Chordata</taxon>
        <taxon>Craniata</taxon>
        <taxon>Vertebrata</taxon>
        <taxon>Euteleostomi</taxon>
        <taxon>Lepidosauria</taxon>
        <taxon>Squamata</taxon>
        <taxon>Bifurcata</taxon>
        <taxon>Unidentata</taxon>
        <taxon>Episquamata</taxon>
        <taxon>Toxicofera</taxon>
        <taxon>Iguania</taxon>
        <taxon>Dactyloidae</taxon>
        <taxon>Anolis</taxon>
    </lineage>
</organism>
<evidence type="ECO:0000250" key="1">
    <source>
        <dbReference type="UniProtKB" id="P37088"/>
    </source>
</evidence>
<evidence type="ECO:0000250" key="2">
    <source>
        <dbReference type="UniProtKB" id="P37089"/>
    </source>
</evidence>
<evidence type="ECO:0000250" key="3">
    <source>
        <dbReference type="UniProtKB" id="Q61180"/>
    </source>
</evidence>
<evidence type="ECO:0000255" key="4"/>
<evidence type="ECO:0000256" key="5">
    <source>
        <dbReference type="SAM" id="MobiDB-lite"/>
    </source>
</evidence>
<evidence type="ECO:0000305" key="6"/>
<sequence>MKSENQPEDKRIGKLKREANMQKMKEAAEVEEKKKEENEALVGFFHSYQELFQFFCNNTTIHGAIRLVCSKKNRMKTAFWSILFFFTFGLMYWQFGIIYREYFSFPVNLNLNLNSDRFTFPAVTLCTLNPYRYSALQNELAELDHITQKTLMDLYKYDMSQGQNNRKAQLSRKRSYRSLHYHVSRHPLHRYKRDSQASIEDNNTQVDKNDWKIAFSVCNENNTDCFKQMYSSGVDAVREWYSFHYINILSRIPNAKSLDESDFASFIYACRFNEVTCDKANYTHFHHPIYGNCYTFNANSSNLWMSSLPGINNGLSLVVRTEQNDFIPLLSTVTGARVMVHNQNEPAFMDEGGFNVRPGIETSISMRKETTNRLGGTYSDCTEDGSDVPVKNLYTSRYTEQVCIRSCFQNSIVERCGCGHYFYPLPSGAVYCDYAKHKAWGYCYYKLLAEFKADLLGCFTKCRKPCKVTEYQLSAGYSRWPSTASEAWVFHILSRQNQYNITSKRNGVAKVNIFFEQWNHKSNGESPAFTVVTLLSQLGSQWSLWFGSSVLSVVELVELILDFIAITCILAIHWLNMNRSSDLPIPTSNTTDTFHNVLPPPNTLPRASVDPDVITLPSYKSLESLDLRRVSSQQTE</sequence>